<proteinExistence type="inferred from homology"/>
<protein>
    <recommendedName>
        <fullName evidence="1">Adapter protein MecA</fullName>
    </recommendedName>
</protein>
<dbReference type="EMBL" id="AP007281">
    <property type="protein sequence ID" value="BAG25068.1"/>
    <property type="molecule type" value="Genomic_DNA"/>
</dbReference>
<dbReference type="RefSeq" id="WP_003666878.1">
    <property type="nucleotide sequence ID" value="NC_010609.1"/>
</dbReference>
<dbReference type="SMR" id="B2G6I6"/>
<dbReference type="KEGG" id="lrf:LAR_0552"/>
<dbReference type="HOGENOM" id="CLU_071496_2_0_9"/>
<dbReference type="GO" id="GO:0030674">
    <property type="term" value="F:protein-macromolecule adaptor activity"/>
    <property type="evidence" value="ECO:0007669"/>
    <property type="project" value="UniProtKB-UniRule"/>
</dbReference>
<dbReference type="Gene3D" id="3.30.70.1950">
    <property type="match status" value="1"/>
</dbReference>
<dbReference type="HAMAP" id="MF_01124">
    <property type="entry name" value="MecA"/>
    <property type="match status" value="1"/>
</dbReference>
<dbReference type="InterPro" id="IPR038471">
    <property type="entry name" value="MecA_C_sf"/>
</dbReference>
<dbReference type="InterPro" id="IPR008681">
    <property type="entry name" value="Neg-reg_MecA"/>
</dbReference>
<dbReference type="PANTHER" id="PTHR39161">
    <property type="entry name" value="ADAPTER PROTEIN MECA"/>
    <property type="match status" value="1"/>
</dbReference>
<dbReference type="PANTHER" id="PTHR39161:SF1">
    <property type="entry name" value="ADAPTER PROTEIN MECA 1"/>
    <property type="match status" value="1"/>
</dbReference>
<dbReference type="Pfam" id="PF05389">
    <property type="entry name" value="MecA"/>
    <property type="match status" value="1"/>
</dbReference>
<dbReference type="PIRSF" id="PIRSF029008">
    <property type="entry name" value="MecA"/>
    <property type="match status" value="1"/>
</dbReference>
<accession>B2G6I6</accession>
<comment type="function">
    <text evidence="1">Enables the recognition and targeting of unfolded and aggregated proteins to the ClpC protease or to other proteins involved in proteolysis.</text>
</comment>
<comment type="subunit">
    <text evidence="1">Homodimer.</text>
</comment>
<comment type="domain">
    <text>The N-terminal domain probably binds unfolded/aggregated proteins; the C-terminal domain interacts with ClpC.</text>
</comment>
<comment type="similarity">
    <text evidence="1">Belongs to the MecA family.</text>
</comment>
<reference key="1">
    <citation type="journal article" date="2008" name="DNA Res.">
        <title>Comparative genome analysis of Lactobacillus reuteri and Lactobacillus fermentum reveal a genomic island for reuterin and cobalamin production.</title>
        <authorList>
            <person name="Morita H."/>
            <person name="Toh H."/>
            <person name="Fukuda S."/>
            <person name="Horikawa H."/>
            <person name="Oshima K."/>
            <person name="Suzuki T."/>
            <person name="Murakami M."/>
            <person name="Hisamatsu S."/>
            <person name="Kato Y."/>
            <person name="Takizawa T."/>
            <person name="Fukuoka H."/>
            <person name="Yoshimura T."/>
            <person name="Itoh K."/>
            <person name="O'Sullivan D.J."/>
            <person name="McKay L.L."/>
            <person name="Ohno H."/>
            <person name="Kikuchi J."/>
            <person name="Masaoka T."/>
            <person name="Hattori M."/>
        </authorList>
    </citation>
    <scope>NUCLEOTIDE SEQUENCE [LARGE SCALE GENOMIC DNA]</scope>
    <source>
        <strain>JCM 1112</strain>
    </source>
</reference>
<evidence type="ECO:0000255" key="1">
    <source>
        <dbReference type="HAMAP-Rule" id="MF_01124"/>
    </source>
</evidence>
<sequence length="223" mass="25701">MEMERINENTIRVLVDNDDLSARGITILDLLGDHQQIEDFFYSILKEVDTDHQFQNNDAVTFQVMPTNNGLELFISKNDSNFAGNEQHGPINDQVSKYIKQHLIQKNSPDQDQRKTAINDSEDNEIQHTNWQVITFDSFEDLIDFAKIAESDDVSSYLYKYNDLYYLAIAYSDSILNSNDVKDQLALAYEYGNPTATTVDFLSEHGKKIMSVSALHLIRHYFE</sequence>
<name>MECA_LIMRJ</name>
<gene>
    <name evidence="1" type="primary">mecA</name>
    <name type="ordered locus">LAR_0552</name>
</gene>
<feature type="chain" id="PRO_1000137282" description="Adapter protein MecA">
    <location>
        <begin position="1"/>
        <end position="223"/>
    </location>
</feature>
<organism>
    <name type="scientific">Limosilactobacillus reuteri subsp. reuteri (strain JCM 1112)</name>
    <name type="common">Lactobacillus reuteri</name>
    <dbReference type="NCBI Taxonomy" id="557433"/>
    <lineage>
        <taxon>Bacteria</taxon>
        <taxon>Bacillati</taxon>
        <taxon>Bacillota</taxon>
        <taxon>Bacilli</taxon>
        <taxon>Lactobacillales</taxon>
        <taxon>Lactobacillaceae</taxon>
        <taxon>Limosilactobacillus</taxon>
    </lineage>
</organism>